<dbReference type="EMBL" id="AF312033">
    <property type="protein sequence ID" value="AAK28826.1"/>
    <property type="molecule type" value="Genomic_DNA"/>
</dbReference>
<dbReference type="EMBL" id="AK002782">
    <property type="protein sequence ID" value="BAB22355.1"/>
    <property type="molecule type" value="mRNA"/>
</dbReference>
<dbReference type="EMBL" id="AK158620">
    <property type="protein sequence ID" value="BAE34584.1"/>
    <property type="molecule type" value="mRNA"/>
</dbReference>
<dbReference type="EMBL" id="AK162268">
    <property type="protein sequence ID" value="BAE36826.1"/>
    <property type="molecule type" value="mRNA"/>
</dbReference>
<dbReference type="EMBL" id="BC010780">
    <property type="protein sequence ID" value="AAH10780.1"/>
    <property type="molecule type" value="mRNA"/>
</dbReference>
<dbReference type="CCDS" id="CCDS19768.1"/>
<dbReference type="RefSeq" id="NP_083029.1">
    <property type="nucleotide sequence ID" value="NM_028753.3"/>
</dbReference>
<dbReference type="SMR" id="Q9DCH2"/>
<dbReference type="FunCoup" id="Q9DCH2">
    <property type="interactions" value="1716"/>
</dbReference>
<dbReference type="STRING" id="10090.ENSMUSP00000106664"/>
<dbReference type="PhosphoSitePlus" id="Q9DCH2"/>
<dbReference type="PaxDb" id="10090-ENSMUSP00000106664"/>
<dbReference type="PeptideAtlas" id="Q9DCH2"/>
<dbReference type="ProteomicsDB" id="289789"/>
<dbReference type="Pumba" id="Q9DCH2"/>
<dbReference type="Antibodypedia" id="30824">
    <property type="antibodies" value="82 antibodies from 23 providers"/>
</dbReference>
<dbReference type="DNASU" id="74097"/>
<dbReference type="Ensembl" id="ENSMUST00000031728.5">
    <property type="protein sequence ID" value="ENSMUSP00000031728.5"/>
    <property type="gene ID" value="ENSMUSG00000029715.6"/>
</dbReference>
<dbReference type="Ensembl" id="ENSMUST00000111035.2">
    <property type="protein sequence ID" value="ENSMUSP00000106664.2"/>
    <property type="gene ID" value="ENSMUSG00000029715.6"/>
</dbReference>
<dbReference type="GeneID" id="74097"/>
<dbReference type="KEGG" id="mmu:74097"/>
<dbReference type="UCSC" id="uc009aco.1">
    <property type="organism name" value="mouse"/>
</dbReference>
<dbReference type="AGR" id="MGI:1921347"/>
<dbReference type="CTD" id="10248"/>
<dbReference type="MGI" id="MGI:1921347">
    <property type="gene designation" value="Pop7"/>
</dbReference>
<dbReference type="VEuPathDB" id="HostDB:ENSMUSG00000029715"/>
<dbReference type="eggNOG" id="KOG3631">
    <property type="taxonomic scope" value="Eukaryota"/>
</dbReference>
<dbReference type="GeneTree" id="ENSGT00510000048483"/>
<dbReference type="HOGENOM" id="CLU_130587_1_0_1"/>
<dbReference type="InParanoid" id="Q9DCH2"/>
<dbReference type="OMA" id="EVFLHCT"/>
<dbReference type="OrthoDB" id="416729at2759"/>
<dbReference type="PhylomeDB" id="Q9DCH2"/>
<dbReference type="TreeFam" id="TF313948"/>
<dbReference type="BioGRID-ORCS" id="74097">
    <property type="hits" value="27 hits in 82 CRISPR screens"/>
</dbReference>
<dbReference type="ChiTaRS" id="Pop7">
    <property type="organism name" value="mouse"/>
</dbReference>
<dbReference type="PRO" id="PR:Q9DCH2"/>
<dbReference type="Proteomes" id="UP000000589">
    <property type="component" value="Chromosome 5"/>
</dbReference>
<dbReference type="RNAct" id="Q9DCH2">
    <property type="molecule type" value="protein"/>
</dbReference>
<dbReference type="Bgee" id="ENSMUSG00000029715">
    <property type="expression patterns" value="Expressed in dorsal pancreas and 250 other cell types or tissues"/>
</dbReference>
<dbReference type="GO" id="GO:0005737">
    <property type="term" value="C:cytoplasm"/>
    <property type="evidence" value="ECO:0007669"/>
    <property type="project" value="UniProtKB-SubCell"/>
</dbReference>
<dbReference type="GO" id="GO:0030681">
    <property type="term" value="C:multimeric ribonuclease P complex"/>
    <property type="evidence" value="ECO:0000250"/>
    <property type="project" value="UniProtKB"/>
</dbReference>
<dbReference type="GO" id="GO:0005655">
    <property type="term" value="C:nucleolar ribonuclease P complex"/>
    <property type="evidence" value="ECO:0007669"/>
    <property type="project" value="InterPro"/>
</dbReference>
<dbReference type="GO" id="GO:0005730">
    <property type="term" value="C:nucleolus"/>
    <property type="evidence" value="ECO:0000250"/>
    <property type="project" value="UniProtKB"/>
</dbReference>
<dbReference type="GO" id="GO:0000172">
    <property type="term" value="C:ribonuclease MRP complex"/>
    <property type="evidence" value="ECO:0007669"/>
    <property type="project" value="Ensembl"/>
</dbReference>
<dbReference type="GO" id="GO:0004526">
    <property type="term" value="F:ribonuclease P activity"/>
    <property type="evidence" value="ECO:0007669"/>
    <property type="project" value="UniProtKB-EC"/>
</dbReference>
<dbReference type="GO" id="GO:0033204">
    <property type="term" value="F:ribonuclease P RNA binding"/>
    <property type="evidence" value="ECO:0000250"/>
    <property type="project" value="UniProtKB"/>
</dbReference>
<dbReference type="GO" id="GO:0006364">
    <property type="term" value="P:rRNA processing"/>
    <property type="evidence" value="ECO:0007669"/>
    <property type="project" value="UniProtKB-KW"/>
</dbReference>
<dbReference type="GO" id="GO:0001682">
    <property type="term" value="P:tRNA 5'-leader removal"/>
    <property type="evidence" value="ECO:0000250"/>
    <property type="project" value="UniProtKB"/>
</dbReference>
<dbReference type="FunFam" id="3.30.110.20:FF:000002">
    <property type="entry name" value="Ribonuclease P protein subunit p20"/>
    <property type="match status" value="1"/>
</dbReference>
<dbReference type="Gene3D" id="3.30.110.20">
    <property type="entry name" value="Alba-like domain"/>
    <property type="match status" value="1"/>
</dbReference>
<dbReference type="InterPro" id="IPR036882">
    <property type="entry name" value="Alba-like_dom_sf"/>
</dbReference>
<dbReference type="InterPro" id="IPR014612">
    <property type="entry name" value="Pop7/Rpp20"/>
</dbReference>
<dbReference type="PANTHER" id="PTHR15314">
    <property type="entry name" value="RIBONUCLEASE P PROTEIN SUBUNIT P20"/>
    <property type="match status" value="1"/>
</dbReference>
<dbReference type="PANTHER" id="PTHR15314:SF1">
    <property type="entry name" value="RIBONUCLEASE P PROTEIN SUBUNIT P20"/>
    <property type="match status" value="1"/>
</dbReference>
<dbReference type="Pfam" id="PF12328">
    <property type="entry name" value="Rpp20"/>
    <property type="match status" value="1"/>
</dbReference>
<dbReference type="PIRSF" id="PIRSF036572">
    <property type="entry name" value="RPP20"/>
    <property type="match status" value="1"/>
</dbReference>
<dbReference type="SUPFAM" id="SSF82704">
    <property type="entry name" value="AlbA-like"/>
    <property type="match status" value="1"/>
</dbReference>
<reference key="1">
    <citation type="journal article" date="2001" name="Nucleic Acids Res.">
        <title>Comparative analysis of the gene-dense ACHE/TFR2 region on human chromosome 7q22 with the orthologous region on mouse chromosome 5.</title>
        <authorList>
            <person name="Wilson M.D."/>
            <person name="Riemer C."/>
            <person name="Martindale D.W."/>
            <person name="Schnupf P."/>
            <person name="Boright A.P."/>
            <person name="Cheung T.L."/>
            <person name="Hardy D.M."/>
            <person name="Schwartz S."/>
            <person name="Scherer S.W."/>
            <person name="Tsui L.-C."/>
            <person name="Miller W."/>
            <person name="Koop B.F."/>
        </authorList>
    </citation>
    <scope>NUCLEOTIDE SEQUENCE [GENOMIC DNA]</scope>
    <source>
        <strain>129/Sv</strain>
    </source>
</reference>
<reference key="2">
    <citation type="journal article" date="2005" name="Science">
        <title>The transcriptional landscape of the mammalian genome.</title>
        <authorList>
            <person name="Carninci P."/>
            <person name="Kasukawa T."/>
            <person name="Katayama S."/>
            <person name="Gough J."/>
            <person name="Frith M.C."/>
            <person name="Maeda N."/>
            <person name="Oyama R."/>
            <person name="Ravasi T."/>
            <person name="Lenhard B."/>
            <person name="Wells C."/>
            <person name="Kodzius R."/>
            <person name="Shimokawa K."/>
            <person name="Bajic V.B."/>
            <person name="Brenner S.E."/>
            <person name="Batalov S."/>
            <person name="Forrest A.R."/>
            <person name="Zavolan M."/>
            <person name="Davis M.J."/>
            <person name="Wilming L.G."/>
            <person name="Aidinis V."/>
            <person name="Allen J.E."/>
            <person name="Ambesi-Impiombato A."/>
            <person name="Apweiler R."/>
            <person name="Aturaliya R.N."/>
            <person name="Bailey T.L."/>
            <person name="Bansal M."/>
            <person name="Baxter L."/>
            <person name="Beisel K.W."/>
            <person name="Bersano T."/>
            <person name="Bono H."/>
            <person name="Chalk A.M."/>
            <person name="Chiu K.P."/>
            <person name="Choudhary V."/>
            <person name="Christoffels A."/>
            <person name="Clutterbuck D.R."/>
            <person name="Crowe M.L."/>
            <person name="Dalla E."/>
            <person name="Dalrymple B.P."/>
            <person name="de Bono B."/>
            <person name="Della Gatta G."/>
            <person name="di Bernardo D."/>
            <person name="Down T."/>
            <person name="Engstrom P."/>
            <person name="Fagiolini M."/>
            <person name="Faulkner G."/>
            <person name="Fletcher C.F."/>
            <person name="Fukushima T."/>
            <person name="Furuno M."/>
            <person name="Futaki S."/>
            <person name="Gariboldi M."/>
            <person name="Georgii-Hemming P."/>
            <person name="Gingeras T.R."/>
            <person name="Gojobori T."/>
            <person name="Green R.E."/>
            <person name="Gustincich S."/>
            <person name="Harbers M."/>
            <person name="Hayashi Y."/>
            <person name="Hensch T.K."/>
            <person name="Hirokawa N."/>
            <person name="Hill D."/>
            <person name="Huminiecki L."/>
            <person name="Iacono M."/>
            <person name="Ikeo K."/>
            <person name="Iwama A."/>
            <person name="Ishikawa T."/>
            <person name="Jakt M."/>
            <person name="Kanapin A."/>
            <person name="Katoh M."/>
            <person name="Kawasawa Y."/>
            <person name="Kelso J."/>
            <person name="Kitamura H."/>
            <person name="Kitano H."/>
            <person name="Kollias G."/>
            <person name="Krishnan S.P."/>
            <person name="Kruger A."/>
            <person name="Kummerfeld S.K."/>
            <person name="Kurochkin I.V."/>
            <person name="Lareau L.F."/>
            <person name="Lazarevic D."/>
            <person name="Lipovich L."/>
            <person name="Liu J."/>
            <person name="Liuni S."/>
            <person name="McWilliam S."/>
            <person name="Madan Babu M."/>
            <person name="Madera M."/>
            <person name="Marchionni L."/>
            <person name="Matsuda H."/>
            <person name="Matsuzawa S."/>
            <person name="Miki H."/>
            <person name="Mignone F."/>
            <person name="Miyake S."/>
            <person name="Morris K."/>
            <person name="Mottagui-Tabar S."/>
            <person name="Mulder N."/>
            <person name="Nakano N."/>
            <person name="Nakauchi H."/>
            <person name="Ng P."/>
            <person name="Nilsson R."/>
            <person name="Nishiguchi S."/>
            <person name="Nishikawa S."/>
            <person name="Nori F."/>
            <person name="Ohara O."/>
            <person name="Okazaki Y."/>
            <person name="Orlando V."/>
            <person name="Pang K.C."/>
            <person name="Pavan W.J."/>
            <person name="Pavesi G."/>
            <person name="Pesole G."/>
            <person name="Petrovsky N."/>
            <person name="Piazza S."/>
            <person name="Reed J."/>
            <person name="Reid J.F."/>
            <person name="Ring B.Z."/>
            <person name="Ringwald M."/>
            <person name="Rost B."/>
            <person name="Ruan Y."/>
            <person name="Salzberg S.L."/>
            <person name="Sandelin A."/>
            <person name="Schneider C."/>
            <person name="Schoenbach C."/>
            <person name="Sekiguchi K."/>
            <person name="Semple C.A."/>
            <person name="Seno S."/>
            <person name="Sessa L."/>
            <person name="Sheng Y."/>
            <person name="Shibata Y."/>
            <person name="Shimada H."/>
            <person name="Shimada K."/>
            <person name="Silva D."/>
            <person name="Sinclair B."/>
            <person name="Sperling S."/>
            <person name="Stupka E."/>
            <person name="Sugiura K."/>
            <person name="Sultana R."/>
            <person name="Takenaka Y."/>
            <person name="Taki K."/>
            <person name="Tammoja K."/>
            <person name="Tan S.L."/>
            <person name="Tang S."/>
            <person name="Taylor M.S."/>
            <person name="Tegner J."/>
            <person name="Teichmann S.A."/>
            <person name="Ueda H.R."/>
            <person name="van Nimwegen E."/>
            <person name="Verardo R."/>
            <person name="Wei C.L."/>
            <person name="Yagi K."/>
            <person name="Yamanishi H."/>
            <person name="Zabarovsky E."/>
            <person name="Zhu S."/>
            <person name="Zimmer A."/>
            <person name="Hide W."/>
            <person name="Bult C."/>
            <person name="Grimmond S.M."/>
            <person name="Teasdale R.D."/>
            <person name="Liu E.T."/>
            <person name="Brusic V."/>
            <person name="Quackenbush J."/>
            <person name="Wahlestedt C."/>
            <person name="Mattick J.S."/>
            <person name="Hume D.A."/>
            <person name="Kai C."/>
            <person name="Sasaki D."/>
            <person name="Tomaru Y."/>
            <person name="Fukuda S."/>
            <person name="Kanamori-Katayama M."/>
            <person name="Suzuki M."/>
            <person name="Aoki J."/>
            <person name="Arakawa T."/>
            <person name="Iida J."/>
            <person name="Imamura K."/>
            <person name="Itoh M."/>
            <person name="Kato T."/>
            <person name="Kawaji H."/>
            <person name="Kawagashira N."/>
            <person name="Kawashima T."/>
            <person name="Kojima M."/>
            <person name="Kondo S."/>
            <person name="Konno H."/>
            <person name="Nakano K."/>
            <person name="Ninomiya N."/>
            <person name="Nishio T."/>
            <person name="Okada M."/>
            <person name="Plessy C."/>
            <person name="Shibata K."/>
            <person name="Shiraki T."/>
            <person name="Suzuki S."/>
            <person name="Tagami M."/>
            <person name="Waki K."/>
            <person name="Watahiki A."/>
            <person name="Okamura-Oho Y."/>
            <person name="Suzuki H."/>
            <person name="Kawai J."/>
            <person name="Hayashizaki Y."/>
        </authorList>
    </citation>
    <scope>NUCLEOTIDE SEQUENCE [LARGE SCALE MRNA]</scope>
    <source>
        <strain>C57BL/6J</strain>
        <tissue>Egg</tissue>
        <tissue>Kidney</tissue>
        <tissue>Visual cortex</tissue>
    </source>
</reference>
<reference key="3">
    <citation type="journal article" date="2004" name="Genome Res.">
        <title>The status, quality, and expansion of the NIH full-length cDNA project: the Mammalian Gene Collection (MGC).</title>
        <authorList>
            <consortium name="The MGC Project Team"/>
        </authorList>
    </citation>
    <scope>NUCLEOTIDE SEQUENCE [LARGE SCALE MRNA]</scope>
    <source>
        <strain>FVB/N</strain>
        <tissue>Colon</tissue>
    </source>
</reference>
<keyword id="KW-0963">Cytoplasm</keyword>
<keyword id="KW-0539">Nucleus</keyword>
<keyword id="KW-1185">Reference proteome</keyword>
<keyword id="KW-0698">rRNA processing</keyword>
<keyword id="KW-0819">tRNA processing</keyword>
<gene>
    <name type="primary">Pop7</name>
    <name type="synonym">Rpp20</name>
</gene>
<comment type="function">
    <text evidence="1">Component of ribonuclease P, a ribonucleoprotein complex that generates mature tRNA molecules by cleaving their 5'-ends. Also a component of the MRP ribonuclease complex, which cleaves pre-rRNA sequences.</text>
</comment>
<comment type="subunit">
    <text evidence="1">Component of nuclear RNase P and RNase MRP complexes. RNase P consists of a catalytic RNA moiety and 10 different protein chains; POP1, POP4, POP5, POP7, RPP14, RPP21, RPP25, RPP30, RPP38 and RPP40. Within the RNase P complex, POP1, POP7 and RPP25 form the 'finger' subcomplex, POP5, RPP14, RPP40 and homodimeric RPP30 form the 'palm' subcomplex, and RPP21, POP4 and RPP38 form the 'wrist' subcomplex. All subunits of the RNase P complex interact with the catalytic RNA. Several subunits of RNase P are also part of the RNase MRP complex. RNase MRP consists of a catalytic RNA moiety and about 8 protein subunits; POP1, POP7, RPP25, RPP30, RPP38, RPP40 and possibly also POP4 and POP5. Interacts with SMN1. POP7 forms a heterodimer with RPP25 that binds to the P3 stem loop of the catalytic RNA.</text>
</comment>
<comment type="subcellular location">
    <subcellularLocation>
        <location evidence="1">Nucleus</location>
        <location evidence="1">Nucleolus</location>
    </subcellularLocation>
    <subcellularLocation>
        <location evidence="1">Cytoplasm</location>
    </subcellularLocation>
    <subcellularLocation>
        <location evidence="1">Cytoplasmic granule</location>
    </subcellularLocation>
    <text evidence="1">Under stress conditions colocalizes with SMN1 in punctuated cytoplasmic granules.</text>
</comment>
<comment type="similarity">
    <text evidence="2">Belongs to the histone-like Alba family.</text>
</comment>
<sequence>MAENREPRCAIEAELDPVEYTLRKRLPHRLPRRPNDIYVNMKTDFKAQLARCQKLLDGGTRGQNACTEIYIHGLGLAINRAINIALQLQAGSFGSLQVAANTSTVELVDELEPETDSREPLTRVRNNSAIHIRVFRVTPK</sequence>
<name>POP7_MOUSE</name>
<proteinExistence type="evidence at transcript level"/>
<organism>
    <name type="scientific">Mus musculus</name>
    <name type="common">Mouse</name>
    <dbReference type="NCBI Taxonomy" id="10090"/>
    <lineage>
        <taxon>Eukaryota</taxon>
        <taxon>Metazoa</taxon>
        <taxon>Chordata</taxon>
        <taxon>Craniata</taxon>
        <taxon>Vertebrata</taxon>
        <taxon>Euteleostomi</taxon>
        <taxon>Mammalia</taxon>
        <taxon>Eutheria</taxon>
        <taxon>Euarchontoglires</taxon>
        <taxon>Glires</taxon>
        <taxon>Rodentia</taxon>
        <taxon>Myomorpha</taxon>
        <taxon>Muroidea</taxon>
        <taxon>Muridae</taxon>
        <taxon>Murinae</taxon>
        <taxon>Mus</taxon>
        <taxon>Mus</taxon>
    </lineage>
</organism>
<feature type="chain" id="PRO_0000237701" description="Ribonuclease P protein subunit p20">
    <location>
        <begin position="1"/>
        <end position="140"/>
    </location>
</feature>
<evidence type="ECO:0000250" key="1">
    <source>
        <dbReference type="UniProtKB" id="O75817"/>
    </source>
</evidence>
<evidence type="ECO:0000305" key="2"/>
<accession>Q9DCH2</accession>
<protein>
    <recommendedName>
        <fullName>Ribonuclease P protein subunit p20</fullName>
        <shortName>RNaseP protein p20</shortName>
    </recommendedName>
</protein>